<sequence>MSMFCFQCQETAGCKGCTVRGVCGKTEDVAKIQDLLIFVTKGLATVANEGRKVGIVDKKVNRMIIDNLFITITNANFDFKAIEKRVKDTLVAREELKERVQAKGGNPIGSDFKGCATWTATTSEEMMEKASQVGVLATENEDIRSLRELIMYGLKGLAAYMEHAMNLGHDKEEVHAFMAETLVKILDDSLSADELTALALETGKFGVDGMALLDEANTSTYGHPEITKVNIGVRNNPGILISGHDLKDLEMLLEQTEGTGVDVYTHGEMLPGHYYPKFKKYAHFAGNYGNAWWLQNKEFASFNGPILMTTNCITPVQDSYRGRIFTTGAVGYEGCIHITADENGYKDFSQIIELAKTCKAPTEIETGEIVGGFAHNQVLALADQVVDAVKSGAIRRFFVMAGCDGRAKSRDYYREFAEKLPKDTVILTAGCAKYKYNKLPLGDINGIPRVLDAGQCNDSYSLVVIALKLAEVFGTDSVNELPISYNIAWYEQKAVIVLLSLLHLGVKNIHLGPTLPAFLSPNVAKVLVENFGIGGITNVEDDMKMFLGE</sequence>
<name>HCP_CLOPE</name>
<comment type="function">
    <text evidence="1">Catalyzes the reduction of hydroxylamine to form NH(3) and H(2)O.</text>
</comment>
<comment type="catalytic activity">
    <reaction evidence="1">
        <text>A + NH4(+) + H2O = hydroxylamine + AH2 + H(+)</text>
        <dbReference type="Rhea" id="RHEA:22052"/>
        <dbReference type="ChEBI" id="CHEBI:13193"/>
        <dbReference type="ChEBI" id="CHEBI:15377"/>
        <dbReference type="ChEBI" id="CHEBI:15378"/>
        <dbReference type="ChEBI" id="CHEBI:15429"/>
        <dbReference type="ChEBI" id="CHEBI:17499"/>
        <dbReference type="ChEBI" id="CHEBI:28938"/>
        <dbReference type="EC" id="1.7.99.1"/>
    </reaction>
</comment>
<comment type="cofactor">
    <cofactor evidence="1">
        <name>[4Fe-4S] cluster</name>
        <dbReference type="ChEBI" id="CHEBI:49883"/>
    </cofactor>
    <text evidence="1">Binds 1 [4Fe-4S] cluster.</text>
</comment>
<comment type="cofactor">
    <cofactor evidence="1">
        <name>hybrid [4Fe-2O-2S] cluster</name>
        <dbReference type="ChEBI" id="CHEBI:60519"/>
    </cofactor>
    <text evidence="1">Binds 1 hybrid [4Fe-2O-2S] cluster.</text>
</comment>
<comment type="subcellular location">
    <subcellularLocation>
        <location evidence="1">Cytoplasm</location>
    </subcellularLocation>
</comment>
<comment type="similarity">
    <text evidence="1">Belongs to the HCP family.</text>
</comment>
<feature type="chain" id="PRO_0000151672" description="Hydroxylamine reductase">
    <location>
        <begin position="1"/>
        <end position="549"/>
    </location>
</feature>
<feature type="binding site" evidence="1">
    <location>
        <position position="5"/>
    </location>
    <ligand>
        <name>[4Fe-4S] cluster</name>
        <dbReference type="ChEBI" id="CHEBI:49883"/>
    </ligand>
</feature>
<feature type="binding site" evidence="1">
    <location>
        <position position="8"/>
    </location>
    <ligand>
        <name>[4Fe-4S] cluster</name>
        <dbReference type="ChEBI" id="CHEBI:49883"/>
    </ligand>
</feature>
<feature type="binding site" evidence="1">
    <location>
        <position position="17"/>
    </location>
    <ligand>
        <name>[4Fe-4S] cluster</name>
        <dbReference type="ChEBI" id="CHEBI:49883"/>
    </ligand>
</feature>
<feature type="binding site" evidence="1">
    <location>
        <position position="23"/>
    </location>
    <ligand>
        <name>[4Fe-4S] cluster</name>
        <dbReference type="ChEBI" id="CHEBI:49883"/>
    </ligand>
</feature>
<feature type="binding site" evidence="1">
    <location>
        <position position="244"/>
    </location>
    <ligand>
        <name>hybrid [4Fe-2O-2S] cluster</name>
        <dbReference type="ChEBI" id="CHEBI:60519"/>
    </ligand>
</feature>
<feature type="binding site" evidence="1">
    <location>
        <position position="268"/>
    </location>
    <ligand>
        <name>hybrid [4Fe-2O-2S] cluster</name>
        <dbReference type="ChEBI" id="CHEBI:60519"/>
    </ligand>
</feature>
<feature type="binding site" evidence="1">
    <location>
        <position position="312"/>
    </location>
    <ligand>
        <name>hybrid [4Fe-2O-2S] cluster</name>
        <dbReference type="ChEBI" id="CHEBI:60519"/>
    </ligand>
</feature>
<feature type="binding site" description="via persulfide group" evidence="1">
    <location>
        <position position="403"/>
    </location>
    <ligand>
        <name>hybrid [4Fe-2O-2S] cluster</name>
        <dbReference type="ChEBI" id="CHEBI:60519"/>
    </ligand>
</feature>
<feature type="binding site" evidence="1">
    <location>
        <position position="431"/>
    </location>
    <ligand>
        <name>hybrid [4Fe-2O-2S] cluster</name>
        <dbReference type="ChEBI" id="CHEBI:60519"/>
    </ligand>
</feature>
<feature type="binding site" evidence="1">
    <location>
        <position position="456"/>
    </location>
    <ligand>
        <name>hybrid [4Fe-2O-2S] cluster</name>
        <dbReference type="ChEBI" id="CHEBI:60519"/>
    </ligand>
</feature>
<feature type="binding site" evidence="1">
    <location>
        <position position="491"/>
    </location>
    <ligand>
        <name>hybrid [4Fe-2O-2S] cluster</name>
        <dbReference type="ChEBI" id="CHEBI:60519"/>
    </ligand>
</feature>
<feature type="binding site" evidence="1">
    <location>
        <position position="493"/>
    </location>
    <ligand>
        <name>hybrid [4Fe-2O-2S] cluster</name>
        <dbReference type="ChEBI" id="CHEBI:60519"/>
    </ligand>
</feature>
<feature type="modified residue" description="Cysteine persulfide" evidence="1">
    <location>
        <position position="403"/>
    </location>
</feature>
<reference key="1">
    <citation type="journal article" date="2002" name="Proc. Natl. Acad. Sci. U.S.A.">
        <title>Complete genome sequence of Clostridium perfringens, an anaerobic flesh-eater.</title>
        <authorList>
            <person name="Shimizu T."/>
            <person name="Ohtani K."/>
            <person name="Hirakawa H."/>
            <person name="Ohshima K."/>
            <person name="Yamashita A."/>
            <person name="Shiba T."/>
            <person name="Ogasawara N."/>
            <person name="Hattori M."/>
            <person name="Kuhara S."/>
            <person name="Hayashi H."/>
        </authorList>
    </citation>
    <scope>NUCLEOTIDE SEQUENCE [LARGE SCALE GENOMIC DNA]</scope>
    <source>
        <strain>13 / Type A</strain>
    </source>
</reference>
<protein>
    <recommendedName>
        <fullName evidence="1">Hydroxylamine reductase</fullName>
        <ecNumber evidence="1">1.7.99.1</ecNumber>
    </recommendedName>
    <alternativeName>
        <fullName evidence="1">Hybrid-cluster protein</fullName>
        <shortName evidence="1">HCP</shortName>
    </alternativeName>
    <alternativeName>
        <fullName evidence="1">Prismane protein</fullName>
    </alternativeName>
</protein>
<accession>Q8XHA1</accession>
<evidence type="ECO:0000255" key="1">
    <source>
        <dbReference type="HAMAP-Rule" id="MF_00069"/>
    </source>
</evidence>
<keyword id="KW-0004">4Fe-4S</keyword>
<keyword id="KW-0963">Cytoplasm</keyword>
<keyword id="KW-0408">Iron</keyword>
<keyword id="KW-0411">Iron-sulfur</keyword>
<keyword id="KW-0479">Metal-binding</keyword>
<keyword id="KW-0560">Oxidoreductase</keyword>
<keyword id="KW-1185">Reference proteome</keyword>
<gene>
    <name evidence="1" type="primary">hcp</name>
    <name type="ordered locus">CPE2584</name>
</gene>
<dbReference type="EC" id="1.7.99.1" evidence="1"/>
<dbReference type="EMBL" id="BA000016">
    <property type="protein sequence ID" value="BAB82290.1"/>
    <property type="molecule type" value="Genomic_DNA"/>
</dbReference>
<dbReference type="RefSeq" id="WP_041707961.1">
    <property type="nucleotide sequence ID" value="NC_003366.1"/>
</dbReference>
<dbReference type="SMR" id="Q8XHA1"/>
<dbReference type="STRING" id="195102.gene:10491918"/>
<dbReference type="KEGG" id="cpe:CPE2584"/>
<dbReference type="HOGENOM" id="CLU_038344_2_0_9"/>
<dbReference type="Proteomes" id="UP000000818">
    <property type="component" value="Chromosome"/>
</dbReference>
<dbReference type="GO" id="GO:0005737">
    <property type="term" value="C:cytoplasm"/>
    <property type="evidence" value="ECO:0007669"/>
    <property type="project" value="UniProtKB-SubCell"/>
</dbReference>
<dbReference type="GO" id="GO:0051539">
    <property type="term" value="F:4 iron, 4 sulfur cluster binding"/>
    <property type="evidence" value="ECO:0007669"/>
    <property type="project" value="UniProtKB-KW"/>
</dbReference>
<dbReference type="GO" id="GO:0050418">
    <property type="term" value="F:hydroxylamine reductase activity"/>
    <property type="evidence" value="ECO:0007669"/>
    <property type="project" value="UniProtKB-UniRule"/>
</dbReference>
<dbReference type="GO" id="GO:0046872">
    <property type="term" value="F:metal ion binding"/>
    <property type="evidence" value="ECO:0007669"/>
    <property type="project" value="UniProtKB-KW"/>
</dbReference>
<dbReference type="GO" id="GO:0004601">
    <property type="term" value="F:peroxidase activity"/>
    <property type="evidence" value="ECO:0007669"/>
    <property type="project" value="TreeGrafter"/>
</dbReference>
<dbReference type="GO" id="GO:0042542">
    <property type="term" value="P:response to hydrogen peroxide"/>
    <property type="evidence" value="ECO:0007669"/>
    <property type="project" value="TreeGrafter"/>
</dbReference>
<dbReference type="CDD" id="cd01914">
    <property type="entry name" value="HCP"/>
    <property type="match status" value="1"/>
</dbReference>
<dbReference type="FunFam" id="1.20.1270.20:FF:000001">
    <property type="entry name" value="Hydroxylamine reductase"/>
    <property type="match status" value="1"/>
</dbReference>
<dbReference type="FunFam" id="3.40.50.2030:FF:000001">
    <property type="entry name" value="Hydroxylamine reductase"/>
    <property type="match status" value="1"/>
</dbReference>
<dbReference type="FunFam" id="3.40.50.2030:FF:000002">
    <property type="entry name" value="Hydroxylamine reductase"/>
    <property type="match status" value="1"/>
</dbReference>
<dbReference type="Gene3D" id="1.20.1270.20">
    <property type="match status" value="2"/>
</dbReference>
<dbReference type="Gene3D" id="3.40.50.2030">
    <property type="match status" value="2"/>
</dbReference>
<dbReference type="HAMAP" id="MF_00069">
    <property type="entry name" value="Hydroxylam_reduct"/>
    <property type="match status" value="1"/>
</dbReference>
<dbReference type="InterPro" id="IPR004137">
    <property type="entry name" value="HCP/CODH"/>
</dbReference>
<dbReference type="InterPro" id="IPR010048">
    <property type="entry name" value="Hydroxylam_reduct"/>
</dbReference>
<dbReference type="InterPro" id="IPR016099">
    <property type="entry name" value="Prismane-like_a/b-sand"/>
</dbReference>
<dbReference type="InterPro" id="IPR011254">
    <property type="entry name" value="Prismane-like_sf"/>
</dbReference>
<dbReference type="InterPro" id="IPR016100">
    <property type="entry name" value="Prismane_a-bundle"/>
</dbReference>
<dbReference type="NCBIfam" id="TIGR01703">
    <property type="entry name" value="hybrid_clust"/>
    <property type="match status" value="1"/>
</dbReference>
<dbReference type="NCBIfam" id="NF003658">
    <property type="entry name" value="PRK05290.1"/>
    <property type="match status" value="1"/>
</dbReference>
<dbReference type="PANTHER" id="PTHR30109">
    <property type="entry name" value="HYDROXYLAMINE REDUCTASE"/>
    <property type="match status" value="1"/>
</dbReference>
<dbReference type="PANTHER" id="PTHR30109:SF0">
    <property type="entry name" value="HYDROXYLAMINE REDUCTASE"/>
    <property type="match status" value="1"/>
</dbReference>
<dbReference type="Pfam" id="PF03063">
    <property type="entry name" value="Prismane"/>
    <property type="match status" value="1"/>
</dbReference>
<dbReference type="PIRSF" id="PIRSF000076">
    <property type="entry name" value="HCP"/>
    <property type="match status" value="1"/>
</dbReference>
<dbReference type="SUPFAM" id="SSF56821">
    <property type="entry name" value="Prismane protein-like"/>
    <property type="match status" value="1"/>
</dbReference>
<organism>
    <name type="scientific">Clostridium perfringens (strain 13 / Type A)</name>
    <dbReference type="NCBI Taxonomy" id="195102"/>
    <lineage>
        <taxon>Bacteria</taxon>
        <taxon>Bacillati</taxon>
        <taxon>Bacillota</taxon>
        <taxon>Clostridia</taxon>
        <taxon>Eubacteriales</taxon>
        <taxon>Clostridiaceae</taxon>
        <taxon>Clostridium</taxon>
    </lineage>
</organism>
<proteinExistence type="inferred from homology"/>